<keyword id="KW-1185">Reference proteome</keyword>
<keyword id="KW-0687">Ribonucleoprotein</keyword>
<keyword id="KW-0689">Ribosomal protein</keyword>
<reference key="1">
    <citation type="submission" date="2008-04" db="EMBL/GenBank/DDBJ databases">
        <title>Complete sequence of chromosome of Natranaerobius thermophilus JW/NM-WN-LF.</title>
        <authorList>
            <consortium name="US DOE Joint Genome Institute"/>
            <person name="Copeland A."/>
            <person name="Lucas S."/>
            <person name="Lapidus A."/>
            <person name="Glavina del Rio T."/>
            <person name="Dalin E."/>
            <person name="Tice H."/>
            <person name="Bruce D."/>
            <person name="Goodwin L."/>
            <person name="Pitluck S."/>
            <person name="Chertkov O."/>
            <person name="Brettin T."/>
            <person name="Detter J.C."/>
            <person name="Han C."/>
            <person name="Kuske C.R."/>
            <person name="Schmutz J."/>
            <person name="Larimer F."/>
            <person name="Land M."/>
            <person name="Hauser L."/>
            <person name="Kyrpides N."/>
            <person name="Lykidis A."/>
            <person name="Mesbah N.M."/>
            <person name="Wiegel J."/>
        </authorList>
    </citation>
    <scope>NUCLEOTIDE SEQUENCE [LARGE SCALE GENOMIC DNA]</scope>
    <source>
        <strain>ATCC BAA-1301 / DSM 18059 / JW/NM-WN-LF</strain>
    </source>
</reference>
<feature type="chain" id="PRO_1000121462" description="Large ribosomal subunit protein bL12">
    <location>
        <begin position="1"/>
        <end position="126"/>
    </location>
</feature>
<feature type="region of interest" description="Disordered" evidence="2">
    <location>
        <begin position="36"/>
        <end position="57"/>
    </location>
</feature>
<feature type="compositionally biased region" description="Low complexity" evidence="2">
    <location>
        <begin position="36"/>
        <end position="55"/>
    </location>
</feature>
<name>RL7_NATTJ</name>
<dbReference type="EMBL" id="CP001034">
    <property type="protein sequence ID" value="ACB83783.1"/>
    <property type="molecule type" value="Genomic_DNA"/>
</dbReference>
<dbReference type="RefSeq" id="WP_012446674.1">
    <property type="nucleotide sequence ID" value="NC_010718.1"/>
</dbReference>
<dbReference type="SMR" id="B2A4C9"/>
<dbReference type="FunCoup" id="B2A4C9">
    <property type="interactions" value="425"/>
</dbReference>
<dbReference type="STRING" id="457570.Nther_0184"/>
<dbReference type="KEGG" id="nth:Nther_0184"/>
<dbReference type="eggNOG" id="COG0222">
    <property type="taxonomic scope" value="Bacteria"/>
</dbReference>
<dbReference type="HOGENOM" id="CLU_086499_3_0_9"/>
<dbReference type="InParanoid" id="B2A4C9"/>
<dbReference type="OrthoDB" id="9811748at2"/>
<dbReference type="Proteomes" id="UP000001683">
    <property type="component" value="Chromosome"/>
</dbReference>
<dbReference type="GO" id="GO:0022625">
    <property type="term" value="C:cytosolic large ribosomal subunit"/>
    <property type="evidence" value="ECO:0007669"/>
    <property type="project" value="TreeGrafter"/>
</dbReference>
<dbReference type="GO" id="GO:0003729">
    <property type="term" value="F:mRNA binding"/>
    <property type="evidence" value="ECO:0007669"/>
    <property type="project" value="TreeGrafter"/>
</dbReference>
<dbReference type="GO" id="GO:0003735">
    <property type="term" value="F:structural constituent of ribosome"/>
    <property type="evidence" value="ECO:0007669"/>
    <property type="project" value="InterPro"/>
</dbReference>
<dbReference type="GO" id="GO:0006412">
    <property type="term" value="P:translation"/>
    <property type="evidence" value="ECO:0007669"/>
    <property type="project" value="UniProtKB-UniRule"/>
</dbReference>
<dbReference type="CDD" id="cd00387">
    <property type="entry name" value="Ribosomal_L7_L12"/>
    <property type="match status" value="1"/>
</dbReference>
<dbReference type="FunFam" id="3.30.1390.10:FF:000001">
    <property type="entry name" value="50S ribosomal protein L7/L12"/>
    <property type="match status" value="1"/>
</dbReference>
<dbReference type="Gene3D" id="3.30.1390.10">
    <property type="match status" value="1"/>
</dbReference>
<dbReference type="Gene3D" id="1.20.5.710">
    <property type="entry name" value="Single helix bin"/>
    <property type="match status" value="1"/>
</dbReference>
<dbReference type="HAMAP" id="MF_00368">
    <property type="entry name" value="Ribosomal_bL12"/>
    <property type="match status" value="1"/>
</dbReference>
<dbReference type="InterPro" id="IPR000206">
    <property type="entry name" value="Ribosomal_bL12"/>
</dbReference>
<dbReference type="InterPro" id="IPR013823">
    <property type="entry name" value="Ribosomal_bL12_C"/>
</dbReference>
<dbReference type="InterPro" id="IPR014719">
    <property type="entry name" value="Ribosomal_bL12_C/ClpS-like"/>
</dbReference>
<dbReference type="InterPro" id="IPR008932">
    <property type="entry name" value="Ribosomal_bL12_oligo"/>
</dbReference>
<dbReference type="InterPro" id="IPR036235">
    <property type="entry name" value="Ribosomal_bL12_oligo_N_sf"/>
</dbReference>
<dbReference type="NCBIfam" id="TIGR00855">
    <property type="entry name" value="L12"/>
    <property type="match status" value="1"/>
</dbReference>
<dbReference type="PANTHER" id="PTHR45987">
    <property type="entry name" value="39S RIBOSOMAL PROTEIN L12"/>
    <property type="match status" value="1"/>
</dbReference>
<dbReference type="PANTHER" id="PTHR45987:SF4">
    <property type="entry name" value="LARGE RIBOSOMAL SUBUNIT PROTEIN BL12M"/>
    <property type="match status" value="1"/>
</dbReference>
<dbReference type="Pfam" id="PF00542">
    <property type="entry name" value="Ribosomal_L12"/>
    <property type="match status" value="1"/>
</dbReference>
<dbReference type="Pfam" id="PF16320">
    <property type="entry name" value="Ribosomal_L12_N"/>
    <property type="match status" value="1"/>
</dbReference>
<dbReference type="SUPFAM" id="SSF54736">
    <property type="entry name" value="ClpS-like"/>
    <property type="match status" value="1"/>
</dbReference>
<dbReference type="SUPFAM" id="SSF48300">
    <property type="entry name" value="Ribosomal protein L7/12, oligomerisation (N-terminal) domain"/>
    <property type="match status" value="1"/>
</dbReference>
<comment type="function">
    <text evidence="1">Forms part of the ribosomal stalk which helps the ribosome interact with GTP-bound translation factors. Is thus essential for accurate translation.</text>
</comment>
<comment type="subunit">
    <text evidence="1">Homodimer. Part of the ribosomal stalk of the 50S ribosomal subunit. Forms a multimeric L10(L12)X complex, where L10 forms an elongated spine to which 2 to 4 L12 dimers bind in a sequential fashion. Binds GTP-bound translation factors.</text>
</comment>
<comment type="similarity">
    <text evidence="1">Belongs to the bacterial ribosomal protein bL12 family.</text>
</comment>
<organism>
    <name type="scientific">Natranaerobius thermophilus (strain ATCC BAA-1301 / DSM 18059 / JW/NM-WN-LF)</name>
    <dbReference type="NCBI Taxonomy" id="457570"/>
    <lineage>
        <taxon>Bacteria</taxon>
        <taxon>Bacillati</taxon>
        <taxon>Bacillota</taxon>
        <taxon>Clostridia</taxon>
        <taxon>Natranaerobiales</taxon>
        <taxon>Natranaerobiaceae</taxon>
        <taxon>Natranaerobius</taxon>
    </lineage>
</organism>
<accession>B2A4C9</accession>
<proteinExistence type="inferred from homology"/>
<sequence>MSKVQEVLDIVKEMSVLELSELVEAMEEEFGVSAAAPAPAAAPAAGGDQGGAEAAEQTEFDVVLNDAGQKKIQVIKAVKEATGMGLKEAKALADELPKAVKEKVSKEEAEELKEKIEEAGGDVEIK</sequence>
<evidence type="ECO:0000255" key="1">
    <source>
        <dbReference type="HAMAP-Rule" id="MF_00368"/>
    </source>
</evidence>
<evidence type="ECO:0000256" key="2">
    <source>
        <dbReference type="SAM" id="MobiDB-lite"/>
    </source>
</evidence>
<evidence type="ECO:0000305" key="3"/>
<protein>
    <recommendedName>
        <fullName evidence="1">Large ribosomal subunit protein bL12</fullName>
    </recommendedName>
    <alternativeName>
        <fullName evidence="3">50S ribosomal protein L7/L12</fullName>
    </alternativeName>
</protein>
<gene>
    <name evidence="1" type="primary">rplL</name>
    <name type="ordered locus">Nther_0184</name>
</gene>